<protein>
    <recommendedName>
        <fullName>Abscisic acid receptor PYL10</fullName>
    </recommendedName>
    <alternativeName>
        <fullName>ABI1-binding protein 8</fullName>
    </alternativeName>
    <alternativeName>
        <fullName>PYR1-like protein 10</fullName>
    </alternativeName>
    <alternativeName>
        <fullName>Regulatory components of ABA receptor 4</fullName>
    </alternativeName>
</protein>
<dbReference type="EMBL" id="AL035524">
    <property type="protein sequence ID" value="CAB36761.1"/>
    <property type="status" value="ALT_SEQ"/>
    <property type="molecule type" value="Genomic_DNA"/>
</dbReference>
<dbReference type="EMBL" id="AL161572">
    <property type="protein sequence ID" value="CAB79594.1"/>
    <property type="status" value="ALT_SEQ"/>
    <property type="molecule type" value="Genomic_DNA"/>
</dbReference>
<dbReference type="EMBL" id="CP002687">
    <property type="protein sequence ID" value="AEE85409.1"/>
    <property type="molecule type" value="Genomic_DNA"/>
</dbReference>
<dbReference type="EMBL" id="AY142526">
    <property type="protein sequence ID" value="AAN13069.1"/>
    <property type="molecule type" value="mRNA"/>
</dbReference>
<dbReference type="PIR" id="T02893">
    <property type="entry name" value="T02893"/>
</dbReference>
<dbReference type="RefSeq" id="NP_194521.2">
    <property type="nucleotide sequence ID" value="NM_118930.3"/>
</dbReference>
<dbReference type="PDB" id="3R6P">
    <property type="method" value="X-ray"/>
    <property type="resolution" value="2.70 A"/>
    <property type="chains" value="A=1-183"/>
</dbReference>
<dbReference type="PDB" id="3RT0">
    <property type="method" value="X-ray"/>
    <property type="resolution" value="2.11 A"/>
    <property type="chains" value="C/D=1-183"/>
</dbReference>
<dbReference type="PDB" id="3RT2">
    <property type="method" value="X-ray"/>
    <property type="resolution" value="1.50 A"/>
    <property type="chains" value="A=1-183"/>
</dbReference>
<dbReference type="PDB" id="3UQH">
    <property type="method" value="X-ray"/>
    <property type="resolution" value="3.00 A"/>
    <property type="chains" value="A/B=1-183"/>
</dbReference>
<dbReference type="PDB" id="6NWB">
    <property type="method" value="X-ray"/>
    <property type="resolution" value="2.00 A"/>
    <property type="chains" value="A=25-180"/>
</dbReference>
<dbReference type="PDB" id="6NWC">
    <property type="method" value="X-ray"/>
    <property type="resolution" value="2.35 A"/>
    <property type="chains" value="A=25-179"/>
</dbReference>
<dbReference type="PDB" id="7MLC">
    <property type="method" value="X-ray"/>
    <property type="resolution" value="1.77 A"/>
    <property type="chains" value="A=25-183"/>
</dbReference>
<dbReference type="PDB" id="7MLD">
    <property type="method" value="X-ray"/>
    <property type="resolution" value="1.80 A"/>
    <property type="chains" value="A=25-183"/>
</dbReference>
<dbReference type="PDBsum" id="3R6P"/>
<dbReference type="PDBsum" id="3RT0"/>
<dbReference type="PDBsum" id="3RT2"/>
<dbReference type="PDBsum" id="3UQH"/>
<dbReference type="PDBsum" id="6NWB"/>
<dbReference type="PDBsum" id="6NWC"/>
<dbReference type="PDBsum" id="7MLC"/>
<dbReference type="PDBsum" id="7MLD"/>
<dbReference type="SMR" id="Q8H1R0"/>
<dbReference type="BioGRID" id="14192">
    <property type="interactions" value="13"/>
</dbReference>
<dbReference type="FunCoup" id="Q8H1R0">
    <property type="interactions" value="369"/>
</dbReference>
<dbReference type="IntAct" id="Q8H1R0">
    <property type="interactions" value="12"/>
</dbReference>
<dbReference type="STRING" id="3702.Q8H1R0"/>
<dbReference type="iPTMnet" id="Q8H1R0"/>
<dbReference type="PaxDb" id="3702-AT4G27920.1"/>
<dbReference type="EnsemblPlants" id="AT4G27920.1">
    <property type="protein sequence ID" value="AT4G27920.1"/>
    <property type="gene ID" value="AT4G27920"/>
</dbReference>
<dbReference type="GeneID" id="828905"/>
<dbReference type="Gramene" id="AT4G27920.1">
    <property type="protein sequence ID" value="AT4G27920.1"/>
    <property type="gene ID" value="AT4G27920"/>
</dbReference>
<dbReference type="KEGG" id="ath:AT4G27920"/>
<dbReference type="Araport" id="AT4G27920"/>
<dbReference type="TAIR" id="AT4G27920">
    <property type="gene designation" value="PYL10"/>
</dbReference>
<dbReference type="eggNOG" id="ENOG502QPYH">
    <property type="taxonomic scope" value="Eukaryota"/>
</dbReference>
<dbReference type="HOGENOM" id="CLU_077517_0_1_1"/>
<dbReference type="InParanoid" id="Q8H1R0"/>
<dbReference type="OMA" id="DYIKMHH"/>
<dbReference type="OrthoDB" id="4436220at2759"/>
<dbReference type="PhylomeDB" id="Q8H1R0"/>
<dbReference type="EvolutionaryTrace" id="Q8H1R0"/>
<dbReference type="PRO" id="PR:Q8H1R0"/>
<dbReference type="Proteomes" id="UP000006548">
    <property type="component" value="Chromosome 4"/>
</dbReference>
<dbReference type="ExpressionAtlas" id="Q8H1R0">
    <property type="expression patterns" value="baseline and differential"/>
</dbReference>
<dbReference type="GO" id="GO:0005737">
    <property type="term" value="C:cytoplasm"/>
    <property type="evidence" value="ECO:0000250"/>
    <property type="project" value="UniProtKB"/>
</dbReference>
<dbReference type="GO" id="GO:0005634">
    <property type="term" value="C:nucleus"/>
    <property type="evidence" value="ECO:0000250"/>
    <property type="project" value="UniProtKB"/>
</dbReference>
<dbReference type="GO" id="GO:0005886">
    <property type="term" value="C:plasma membrane"/>
    <property type="evidence" value="ECO:0007669"/>
    <property type="project" value="UniProtKB-SubCell"/>
</dbReference>
<dbReference type="GO" id="GO:0010427">
    <property type="term" value="F:abscisic acid binding"/>
    <property type="evidence" value="ECO:0000250"/>
    <property type="project" value="UniProtKB"/>
</dbReference>
<dbReference type="GO" id="GO:0042803">
    <property type="term" value="F:protein homodimerization activity"/>
    <property type="evidence" value="ECO:0000250"/>
    <property type="project" value="UniProtKB"/>
</dbReference>
<dbReference type="GO" id="GO:0004864">
    <property type="term" value="F:protein phosphatase inhibitor activity"/>
    <property type="evidence" value="ECO:0000314"/>
    <property type="project" value="UniProtKB"/>
</dbReference>
<dbReference type="GO" id="GO:0038023">
    <property type="term" value="F:signaling receptor activity"/>
    <property type="evidence" value="ECO:0000250"/>
    <property type="project" value="UniProtKB"/>
</dbReference>
<dbReference type="GO" id="GO:0009738">
    <property type="term" value="P:abscisic acid-activated signaling pathway"/>
    <property type="evidence" value="ECO:0000250"/>
    <property type="project" value="UniProtKB"/>
</dbReference>
<dbReference type="CDD" id="cd07821">
    <property type="entry name" value="PYR_PYL_RCAR_like"/>
    <property type="match status" value="1"/>
</dbReference>
<dbReference type="FunFam" id="3.30.530.20:FF:000039">
    <property type="entry name" value="Bet v I allergen-like"/>
    <property type="match status" value="1"/>
</dbReference>
<dbReference type="Gene3D" id="3.30.530.20">
    <property type="match status" value="1"/>
</dbReference>
<dbReference type="InterPro" id="IPR050279">
    <property type="entry name" value="Plant_def-hormone_signal"/>
</dbReference>
<dbReference type="InterPro" id="IPR019587">
    <property type="entry name" value="Polyketide_cyclase/dehydratase"/>
</dbReference>
<dbReference type="InterPro" id="IPR023393">
    <property type="entry name" value="START-like_dom_sf"/>
</dbReference>
<dbReference type="PANTHER" id="PTHR31213:SF61">
    <property type="entry name" value="ABSCISIC ACID RECEPTOR PYL10"/>
    <property type="match status" value="1"/>
</dbReference>
<dbReference type="PANTHER" id="PTHR31213">
    <property type="entry name" value="OS08G0374000 PROTEIN-RELATED"/>
    <property type="match status" value="1"/>
</dbReference>
<dbReference type="Pfam" id="PF10604">
    <property type="entry name" value="Polyketide_cyc2"/>
    <property type="match status" value="1"/>
</dbReference>
<dbReference type="SUPFAM" id="SSF55961">
    <property type="entry name" value="Bet v1-like"/>
    <property type="match status" value="1"/>
</dbReference>
<feature type="chain" id="PRO_0000391745" description="Abscisic acid receptor PYL10">
    <location>
        <begin position="1"/>
        <end position="183"/>
    </location>
</feature>
<feature type="region of interest" description="START-like">
    <location>
        <begin position="20"/>
        <end position="172"/>
    </location>
</feature>
<feature type="short sequence motif" description="Gate loop" evidence="4">
    <location>
        <begin position="81"/>
        <end position="85"/>
    </location>
</feature>
<feature type="short sequence motif" description="Latch loop" evidence="4">
    <location>
        <begin position="111"/>
        <end position="113"/>
    </location>
</feature>
<feature type="binding site" evidence="10 12">
    <location>
        <position position="56"/>
    </location>
    <ligand>
        <name>abscisate</name>
        <dbReference type="ChEBI" id="CHEBI:62432"/>
    </ligand>
</feature>
<feature type="binding site" evidence="1">
    <location>
        <begin position="85"/>
        <end position="90"/>
    </location>
    <ligand>
        <name>abscisate</name>
        <dbReference type="ChEBI" id="CHEBI:62432"/>
    </ligand>
</feature>
<feature type="binding site" evidence="1">
    <location>
        <begin position="112"/>
        <end position="118"/>
    </location>
    <ligand>
        <name>abscisate</name>
        <dbReference type="ChEBI" id="CHEBI:62432"/>
    </ligand>
</feature>
<feature type="binding site" evidence="1">
    <location>
        <position position="137"/>
    </location>
    <ligand>
        <name>abscisate</name>
        <dbReference type="ChEBI" id="CHEBI:62432"/>
    </ligand>
</feature>
<feature type="site" description="Involved in ABA binding" evidence="3">
    <location>
        <position position="57"/>
    </location>
</feature>
<feature type="site" description="Involved in interactions with PP2Cs" evidence="1">
    <location>
        <position position="84"/>
    </location>
</feature>
<feature type="site" description="Involved in ABA binding" evidence="3">
    <location>
        <position position="104"/>
    </location>
</feature>
<feature type="site" description="Involved in interactions with PP2Cs" evidence="1">
    <location>
        <position position="148"/>
    </location>
</feature>
<feature type="site" description="Involved in ABA binding" evidence="3">
    <location>
        <position position="156"/>
    </location>
</feature>
<feature type="site" description="Involved in ABA binding" evidence="3">
    <location>
        <position position="159"/>
    </location>
</feature>
<feature type="disulfide bond" description="Reversible" evidence="3">
    <location>
        <begin position="27"/>
        <end position="153"/>
    </location>
</feature>
<feature type="helix" evidence="13">
    <location>
        <begin position="12"/>
        <end position="17"/>
    </location>
</feature>
<feature type="strand" evidence="13">
    <location>
        <begin position="26"/>
        <end position="37"/>
    </location>
</feature>
<feature type="helix" evidence="13">
    <location>
        <begin position="39"/>
        <end position="46"/>
    </location>
</feature>
<feature type="helix" evidence="13">
    <location>
        <begin position="52"/>
        <end position="54"/>
    </location>
</feature>
<feature type="strand" evidence="13">
    <location>
        <begin position="59"/>
        <end position="67"/>
    </location>
</feature>
<feature type="strand" evidence="14">
    <location>
        <begin position="68"/>
        <end position="70"/>
    </location>
</feature>
<feature type="strand" evidence="13">
    <location>
        <begin position="74"/>
        <end position="79"/>
    </location>
</feature>
<feature type="strand" evidence="15">
    <location>
        <begin position="81"/>
        <end position="84"/>
    </location>
</feature>
<feature type="strand" evidence="13">
    <location>
        <begin position="87"/>
        <end position="96"/>
    </location>
</feature>
<feature type="turn" evidence="13">
    <location>
        <begin position="97"/>
        <end position="100"/>
    </location>
</feature>
<feature type="strand" evidence="13">
    <location>
        <begin position="101"/>
        <end position="110"/>
    </location>
</feature>
<feature type="strand" evidence="13">
    <location>
        <begin position="117"/>
        <end position="127"/>
    </location>
</feature>
<feature type="strand" evidence="13">
    <location>
        <begin position="130"/>
        <end position="142"/>
    </location>
</feature>
<feature type="strand" evidence="14">
    <location>
        <begin position="145"/>
        <end position="147"/>
    </location>
</feature>
<feature type="helix" evidence="13">
    <location>
        <begin position="149"/>
        <end position="177"/>
    </location>
</feature>
<name>PYL10_ARATH</name>
<organism>
    <name type="scientific">Arabidopsis thaliana</name>
    <name type="common">Mouse-ear cress</name>
    <dbReference type="NCBI Taxonomy" id="3702"/>
    <lineage>
        <taxon>Eukaryota</taxon>
        <taxon>Viridiplantae</taxon>
        <taxon>Streptophyta</taxon>
        <taxon>Embryophyta</taxon>
        <taxon>Tracheophyta</taxon>
        <taxon>Spermatophyta</taxon>
        <taxon>Magnoliopsida</taxon>
        <taxon>eudicotyledons</taxon>
        <taxon>Gunneridae</taxon>
        <taxon>Pentapetalae</taxon>
        <taxon>rosids</taxon>
        <taxon>malvids</taxon>
        <taxon>Brassicales</taxon>
        <taxon>Brassicaceae</taxon>
        <taxon>Camelineae</taxon>
        <taxon>Arabidopsis</taxon>
    </lineage>
</organism>
<accession>Q8H1R0</accession>
<accession>Q9SUE6</accession>
<proteinExistence type="evidence at protein level"/>
<gene>
    <name type="primary">PYL10</name>
    <name type="synonym">RCAR4</name>
    <name type="ordered locus">At4g27920</name>
    <name type="ORF">T13J8.30</name>
</gene>
<evidence type="ECO:0000250" key="1">
    <source>
        <dbReference type="UniProtKB" id="O49686"/>
    </source>
</evidence>
<evidence type="ECO:0000250" key="2">
    <source>
        <dbReference type="UniProtKB" id="O80920"/>
    </source>
</evidence>
<evidence type="ECO:0000250" key="3">
    <source>
        <dbReference type="UniProtKB" id="Q84MC7"/>
    </source>
</evidence>
<evidence type="ECO:0000250" key="4">
    <source>
        <dbReference type="UniProtKB" id="Q8VZS8"/>
    </source>
</evidence>
<evidence type="ECO:0000250" key="5">
    <source>
        <dbReference type="UniProtKB" id="Q9FLB1"/>
    </source>
</evidence>
<evidence type="ECO:0000269" key="6">
    <source>
    </source>
</evidence>
<evidence type="ECO:0000269" key="7">
    <source>
    </source>
</evidence>
<evidence type="ECO:0000269" key="8">
    <source>
    </source>
</evidence>
<evidence type="ECO:0000269" key="9">
    <source>
    </source>
</evidence>
<evidence type="ECO:0000269" key="10">
    <source ref="10"/>
</evidence>
<evidence type="ECO:0000305" key="11"/>
<evidence type="ECO:0007744" key="12">
    <source>
        <dbReference type="PDB" id="3R6P"/>
    </source>
</evidence>
<evidence type="ECO:0007829" key="13">
    <source>
        <dbReference type="PDB" id="3RT2"/>
    </source>
</evidence>
<evidence type="ECO:0007829" key="14">
    <source>
        <dbReference type="PDB" id="6NWB"/>
    </source>
</evidence>
<evidence type="ECO:0007829" key="15">
    <source>
        <dbReference type="PDB" id="6NWC"/>
    </source>
</evidence>
<comment type="function">
    <text evidence="7 8">Receptor for abscisic acid (ABA) required for ABA-mediated responses such as stomatal closure and germination inhibition. Inhibits the activity of group-A protein phosphatases type 2C (PP2Cs) in an ABA-independent manner but more efficiently when activated by ABA (PubMed:21658606, PubMed:23844015). Can be activated by both (-)-ABA and (+)-ABA (PubMed:23844015).</text>
</comment>
<comment type="subunit">
    <text evidence="1 6 7 9">Monomer (PubMed:21658606). Forms heterodimer with PYL13, thus antagonizing PP2Cs-binding and ABA-independent inhibition of PP2Cs (PubMed:24165892). Homodimer. Binds ABA on one subunit only. Binds to CARs protein in an ABA-independent manner, both at the plasma membrane and in the nucleus (By similarity). Interacts with ABI1 and HAB1, and possibly with other PP2Cs, in an ABA-independent manner (PubMed:19874541, PubMed:21658606).</text>
</comment>
<comment type="interaction">
    <interactant intactId="EBI-2363213">
        <id>Q8H1R0</id>
    </interactant>
    <interactant intactId="EBI-782526">
        <id>P49597</id>
        <label>ABI1</label>
    </interactant>
    <organismsDiffer>false</organismsDiffer>
    <experiments>7</experiments>
</comment>
<comment type="interaction">
    <interactant intactId="EBI-2363213">
        <id>Q8H1R0</id>
    </interactant>
    <interactant intactId="EBI-537680">
        <id>O04719</id>
        <label>ABI2</label>
    </interactant>
    <organismsDiffer>false</organismsDiffer>
    <experiments>3</experiments>
</comment>
<comment type="interaction">
    <interactant intactId="EBI-2363213">
        <id>Q8H1R0</id>
    </interactant>
    <interactant intactId="EBI-1573499">
        <id>Q9LNW3</id>
        <label>AIP1</label>
    </interactant>
    <organismsDiffer>false</organismsDiffer>
    <experiments>3</experiments>
</comment>
<comment type="interaction">
    <interactant intactId="EBI-2363213">
        <id>Q8H1R0</id>
    </interactant>
    <interactant intactId="EBI-4441103">
        <id>Q9ZW21</id>
        <label>At2g29380</label>
    </interactant>
    <organismsDiffer>false</organismsDiffer>
    <experiments>7</experiments>
</comment>
<comment type="interaction">
    <interactant intactId="EBI-2363213">
        <id>Q8H1R0</id>
    </interactant>
    <interactant intactId="EBI-25528816">
        <id>Q9SUC0</id>
        <label>At4g20930</label>
    </interactant>
    <organismsDiffer>false</organismsDiffer>
    <experiments>3</experiments>
</comment>
<comment type="interaction">
    <interactant intactId="EBI-2363213">
        <id>Q8H1R0</id>
    </interactant>
    <interactant intactId="EBI-25528847">
        <id>O80507</id>
        <label>CKB4</label>
    </interactant>
    <organismsDiffer>false</organismsDiffer>
    <experiments>5</experiments>
</comment>
<comment type="interaction">
    <interactant intactId="EBI-2363213">
        <id>Q8H1R0</id>
    </interactant>
    <interactant intactId="EBI-2309302">
        <id>Q9CAJ0</id>
        <label>HAB1</label>
    </interactant>
    <organismsDiffer>false</organismsDiffer>
    <experiments>4</experiments>
</comment>
<comment type="interaction">
    <interactant intactId="EBI-2363213">
        <id>Q8H1R0</id>
    </interactant>
    <interactant intactId="EBI-15803614">
        <id>Q9LNP9</id>
        <label>HAB2</label>
    </interactant>
    <organismsDiffer>false</organismsDiffer>
    <experiments>3</experiments>
</comment>
<comment type="interaction">
    <interactant intactId="EBI-2363213">
        <id>Q8H1R0</id>
    </interactant>
    <interactant intactId="EBI-2324225">
        <id>Q9SN12</id>
        <label>MYB77</label>
    </interactant>
    <organismsDiffer>false</organismsDiffer>
    <experiments>3</experiments>
</comment>
<comment type="interaction">
    <interactant intactId="EBI-2363213">
        <id>Q8H1R0</id>
    </interactant>
    <interactant intactId="EBI-1764934">
        <id>P49598</id>
        <label>PP2CA</label>
    </interactant>
    <organismsDiffer>false</organismsDiffer>
    <experiments>3</experiments>
</comment>
<comment type="interaction">
    <interactant intactId="EBI-2363213">
        <id>Q8H1R0</id>
    </interactant>
    <interactant intactId="EBI-2363373">
        <id>Q9FIF5</id>
        <label>SAG113</label>
    </interactant>
    <organismsDiffer>false</organismsDiffer>
    <experiments>3</experiments>
</comment>
<comment type="interaction">
    <interactant intactId="EBI-2363213">
        <id>Q8H1R0</id>
    </interactant>
    <interactant intactId="EBI-4426178">
        <id>Q9LT89</id>
        <label>TCP19</label>
    </interactant>
    <organismsDiffer>false</organismsDiffer>
    <experiments>3</experiments>
</comment>
<comment type="subcellular location">
    <subcellularLocation>
        <location evidence="5">Cytoplasm</location>
    </subcellularLocation>
    <subcellularLocation>
        <location evidence="1">Nucleus</location>
    </subcellularLocation>
    <subcellularLocation>
        <location evidence="1">Cell membrane</location>
    </subcellularLocation>
    <text evidence="2">Localizes at the plasma membrane in the presence of a CAR protein.</text>
</comment>
<comment type="domain">
    <text evidence="4">Upon interaction with ABA, the 'latch' and 'gate' loops change in conformation leading to a tight dimerization and the creation a surface that enables the receptor to dock into and inhibit the PP2C active site.</text>
</comment>
<comment type="similarity">
    <text evidence="11">Belongs to the PYR/PYL/RCAR abscisic acid intracellular receptor family.</text>
</comment>
<comment type="sequence caution" evidence="11">
    <conflict type="erroneous gene model prediction">
        <sequence resource="EMBL-CDS" id="CAB36761"/>
    </conflict>
</comment>
<comment type="sequence caution" evidence="11">
    <conflict type="erroneous gene model prediction">
        <sequence resource="EMBL-CDS" id="CAB79594"/>
    </conflict>
</comment>
<sequence length="183" mass="20642">MNGDETKKVESEYIKKHHRHELVESQCSSTLVKHIKAPLHLVWSIVRRFDEPQKYKPFISRCVVQGKKLEVGSVREVDLKSGLPATKSTEVLEILDDNEHILGIRIVGGDHRLKNYSSTISLHSETIDGKTGTLAIESFVVDVPEGNTKEETCFFVEALIQCNLNSLADVTERLQAESMEKKI</sequence>
<reference key="1">
    <citation type="journal article" date="1999" name="Nature">
        <title>Sequence and analysis of chromosome 4 of the plant Arabidopsis thaliana.</title>
        <authorList>
            <person name="Mayer K.F.X."/>
            <person name="Schueller C."/>
            <person name="Wambutt R."/>
            <person name="Murphy G."/>
            <person name="Volckaert G."/>
            <person name="Pohl T."/>
            <person name="Duesterhoeft A."/>
            <person name="Stiekema W."/>
            <person name="Entian K.-D."/>
            <person name="Terryn N."/>
            <person name="Harris B."/>
            <person name="Ansorge W."/>
            <person name="Brandt P."/>
            <person name="Grivell L.A."/>
            <person name="Rieger M."/>
            <person name="Weichselgartner M."/>
            <person name="de Simone V."/>
            <person name="Obermaier B."/>
            <person name="Mache R."/>
            <person name="Mueller M."/>
            <person name="Kreis M."/>
            <person name="Delseny M."/>
            <person name="Puigdomenech P."/>
            <person name="Watson M."/>
            <person name="Schmidtheini T."/>
            <person name="Reichert B."/>
            <person name="Portetelle D."/>
            <person name="Perez-Alonso M."/>
            <person name="Boutry M."/>
            <person name="Bancroft I."/>
            <person name="Vos P."/>
            <person name="Hoheisel J."/>
            <person name="Zimmermann W."/>
            <person name="Wedler H."/>
            <person name="Ridley P."/>
            <person name="Langham S.-A."/>
            <person name="McCullagh B."/>
            <person name="Bilham L."/>
            <person name="Robben J."/>
            <person name="van der Schueren J."/>
            <person name="Grymonprez B."/>
            <person name="Chuang Y.-J."/>
            <person name="Vandenbussche F."/>
            <person name="Braeken M."/>
            <person name="Weltjens I."/>
            <person name="Voet M."/>
            <person name="Bastiaens I."/>
            <person name="Aert R."/>
            <person name="Defoor E."/>
            <person name="Weitzenegger T."/>
            <person name="Bothe G."/>
            <person name="Ramsperger U."/>
            <person name="Hilbert H."/>
            <person name="Braun M."/>
            <person name="Holzer E."/>
            <person name="Brandt A."/>
            <person name="Peters S."/>
            <person name="van Staveren M."/>
            <person name="Dirkse W."/>
            <person name="Mooijman P."/>
            <person name="Klein Lankhorst R."/>
            <person name="Rose M."/>
            <person name="Hauf J."/>
            <person name="Koetter P."/>
            <person name="Berneiser S."/>
            <person name="Hempel S."/>
            <person name="Feldpausch M."/>
            <person name="Lamberth S."/>
            <person name="Van den Daele H."/>
            <person name="De Keyser A."/>
            <person name="Buysshaert C."/>
            <person name="Gielen J."/>
            <person name="Villarroel R."/>
            <person name="De Clercq R."/>
            <person name="van Montagu M."/>
            <person name="Rogers J."/>
            <person name="Cronin A."/>
            <person name="Quail M.A."/>
            <person name="Bray-Allen S."/>
            <person name="Clark L."/>
            <person name="Doggett J."/>
            <person name="Hall S."/>
            <person name="Kay M."/>
            <person name="Lennard N."/>
            <person name="McLay K."/>
            <person name="Mayes R."/>
            <person name="Pettett A."/>
            <person name="Rajandream M.A."/>
            <person name="Lyne M."/>
            <person name="Benes V."/>
            <person name="Rechmann S."/>
            <person name="Borkova D."/>
            <person name="Bloecker H."/>
            <person name="Scharfe M."/>
            <person name="Grimm M."/>
            <person name="Loehnert T.-H."/>
            <person name="Dose S."/>
            <person name="de Haan M."/>
            <person name="Maarse A.C."/>
            <person name="Schaefer M."/>
            <person name="Mueller-Auer S."/>
            <person name="Gabel C."/>
            <person name="Fuchs M."/>
            <person name="Fartmann B."/>
            <person name="Granderath K."/>
            <person name="Dauner D."/>
            <person name="Herzl A."/>
            <person name="Neumann S."/>
            <person name="Argiriou A."/>
            <person name="Vitale D."/>
            <person name="Liguori R."/>
            <person name="Piravandi E."/>
            <person name="Massenet O."/>
            <person name="Quigley F."/>
            <person name="Clabauld G."/>
            <person name="Muendlein A."/>
            <person name="Felber R."/>
            <person name="Schnabl S."/>
            <person name="Hiller R."/>
            <person name="Schmidt W."/>
            <person name="Lecharny A."/>
            <person name="Aubourg S."/>
            <person name="Chefdor F."/>
            <person name="Cooke R."/>
            <person name="Berger C."/>
            <person name="Monfort A."/>
            <person name="Casacuberta E."/>
            <person name="Gibbons T."/>
            <person name="Weber N."/>
            <person name="Vandenbol M."/>
            <person name="Bargues M."/>
            <person name="Terol J."/>
            <person name="Torres A."/>
            <person name="Perez-Perez A."/>
            <person name="Purnelle B."/>
            <person name="Bent E."/>
            <person name="Johnson S."/>
            <person name="Tacon D."/>
            <person name="Jesse T."/>
            <person name="Heijnen L."/>
            <person name="Schwarz S."/>
            <person name="Scholler P."/>
            <person name="Heber S."/>
            <person name="Francs P."/>
            <person name="Bielke C."/>
            <person name="Frishman D."/>
            <person name="Haase D."/>
            <person name="Lemcke K."/>
            <person name="Mewes H.-W."/>
            <person name="Stocker S."/>
            <person name="Zaccaria P."/>
            <person name="Bevan M."/>
            <person name="Wilson R.K."/>
            <person name="de la Bastide M."/>
            <person name="Habermann K."/>
            <person name="Parnell L."/>
            <person name="Dedhia N."/>
            <person name="Gnoj L."/>
            <person name="Schutz K."/>
            <person name="Huang E."/>
            <person name="Spiegel L."/>
            <person name="Sekhon M."/>
            <person name="Murray J."/>
            <person name="Sheet P."/>
            <person name="Cordes M."/>
            <person name="Abu-Threideh J."/>
            <person name="Stoneking T."/>
            <person name="Kalicki J."/>
            <person name="Graves T."/>
            <person name="Harmon G."/>
            <person name="Edwards J."/>
            <person name="Latreille P."/>
            <person name="Courtney L."/>
            <person name="Cloud J."/>
            <person name="Abbott A."/>
            <person name="Scott K."/>
            <person name="Johnson D."/>
            <person name="Minx P."/>
            <person name="Bentley D."/>
            <person name="Fulton B."/>
            <person name="Miller N."/>
            <person name="Greco T."/>
            <person name="Kemp K."/>
            <person name="Kramer J."/>
            <person name="Fulton L."/>
            <person name="Mardis E."/>
            <person name="Dante M."/>
            <person name="Pepin K."/>
            <person name="Hillier L.W."/>
            <person name="Nelson J."/>
            <person name="Spieth J."/>
            <person name="Ryan E."/>
            <person name="Andrews S."/>
            <person name="Geisel C."/>
            <person name="Layman D."/>
            <person name="Du H."/>
            <person name="Ali J."/>
            <person name="Berghoff A."/>
            <person name="Jones K."/>
            <person name="Drone K."/>
            <person name="Cotton M."/>
            <person name="Joshu C."/>
            <person name="Antonoiu B."/>
            <person name="Zidanic M."/>
            <person name="Strong C."/>
            <person name="Sun H."/>
            <person name="Lamar B."/>
            <person name="Yordan C."/>
            <person name="Ma P."/>
            <person name="Zhong J."/>
            <person name="Preston R."/>
            <person name="Vil D."/>
            <person name="Shekher M."/>
            <person name="Matero A."/>
            <person name="Shah R."/>
            <person name="Swaby I.K."/>
            <person name="O'Shaughnessy A."/>
            <person name="Rodriguez M."/>
            <person name="Hoffman J."/>
            <person name="Till S."/>
            <person name="Granat S."/>
            <person name="Shohdy N."/>
            <person name="Hasegawa A."/>
            <person name="Hameed A."/>
            <person name="Lodhi M."/>
            <person name="Johnson A."/>
            <person name="Chen E."/>
            <person name="Marra M.A."/>
            <person name="Martienssen R."/>
            <person name="McCombie W.R."/>
        </authorList>
    </citation>
    <scope>NUCLEOTIDE SEQUENCE [LARGE SCALE GENOMIC DNA]</scope>
    <source>
        <strain>cv. Columbia</strain>
    </source>
</reference>
<reference key="2">
    <citation type="journal article" date="2017" name="Plant J.">
        <title>Araport11: a complete reannotation of the Arabidopsis thaliana reference genome.</title>
        <authorList>
            <person name="Cheng C.Y."/>
            <person name="Krishnakumar V."/>
            <person name="Chan A.P."/>
            <person name="Thibaud-Nissen F."/>
            <person name="Schobel S."/>
            <person name="Town C.D."/>
        </authorList>
    </citation>
    <scope>GENOME REANNOTATION</scope>
    <source>
        <strain>cv. Columbia</strain>
    </source>
</reference>
<reference key="3">
    <citation type="journal article" date="2003" name="Science">
        <title>Empirical analysis of transcriptional activity in the Arabidopsis genome.</title>
        <authorList>
            <person name="Yamada K."/>
            <person name="Lim J."/>
            <person name="Dale J.M."/>
            <person name="Chen H."/>
            <person name="Shinn P."/>
            <person name="Palm C.J."/>
            <person name="Southwick A.M."/>
            <person name="Wu H.C."/>
            <person name="Kim C.J."/>
            <person name="Nguyen M."/>
            <person name="Pham P.K."/>
            <person name="Cheuk R.F."/>
            <person name="Karlin-Newmann G."/>
            <person name="Liu S.X."/>
            <person name="Lam B."/>
            <person name="Sakano H."/>
            <person name="Wu T."/>
            <person name="Yu G."/>
            <person name="Miranda M."/>
            <person name="Quach H.L."/>
            <person name="Tripp M."/>
            <person name="Chang C.H."/>
            <person name="Lee J.M."/>
            <person name="Toriumi M.J."/>
            <person name="Chan M.M."/>
            <person name="Tang C.C."/>
            <person name="Onodera C.S."/>
            <person name="Deng J.M."/>
            <person name="Akiyama K."/>
            <person name="Ansari Y."/>
            <person name="Arakawa T."/>
            <person name="Banh J."/>
            <person name="Banno F."/>
            <person name="Bowser L."/>
            <person name="Brooks S.Y."/>
            <person name="Carninci P."/>
            <person name="Chao Q."/>
            <person name="Choy N."/>
            <person name="Enju A."/>
            <person name="Goldsmith A.D."/>
            <person name="Gurjal M."/>
            <person name="Hansen N.F."/>
            <person name="Hayashizaki Y."/>
            <person name="Johnson-Hopson C."/>
            <person name="Hsuan V.W."/>
            <person name="Iida K."/>
            <person name="Karnes M."/>
            <person name="Khan S."/>
            <person name="Koesema E."/>
            <person name="Ishida J."/>
            <person name="Jiang P.X."/>
            <person name="Jones T."/>
            <person name="Kawai J."/>
            <person name="Kamiya A."/>
            <person name="Meyers C."/>
            <person name="Nakajima M."/>
            <person name="Narusaka M."/>
            <person name="Seki M."/>
            <person name="Sakurai T."/>
            <person name="Satou M."/>
            <person name="Tamse R."/>
            <person name="Vaysberg M."/>
            <person name="Wallender E.K."/>
            <person name="Wong C."/>
            <person name="Yamamura Y."/>
            <person name="Yuan S."/>
            <person name="Shinozaki K."/>
            <person name="Davis R.W."/>
            <person name="Theologis A."/>
            <person name="Ecker J.R."/>
        </authorList>
    </citation>
    <scope>NUCLEOTIDE SEQUENCE [LARGE SCALE MRNA]</scope>
    <source>
        <strain>cv. Columbia</strain>
    </source>
</reference>
<reference key="4">
    <citation type="journal article" date="2009" name="Science">
        <title>Regulators of PP2C phosphatase activity function as abscisic acid sensors.</title>
        <authorList>
            <person name="Ma Y."/>
            <person name="Szostkiewicz I."/>
            <person name="Korte A."/>
            <person name="Moes D."/>
            <person name="Yang Y."/>
            <person name="Christmann A."/>
            <person name="Grill E."/>
        </authorList>
    </citation>
    <scope>GENE FAMILY</scope>
</reference>
<reference key="5">
    <citation type="journal article" date="2009" name="Science">
        <title>Abscisic acid inhibits type 2C protein phosphatases via the PYR/PYL family of START proteins.</title>
        <authorList>
            <person name="Park S.-Y."/>
            <person name="Fung P."/>
            <person name="Nishimura N."/>
            <person name="Jensen D.R."/>
            <person name="Fujii H."/>
            <person name="Zhao Y."/>
            <person name="Lumba S."/>
            <person name="Santiago J."/>
            <person name="Rodrigues A."/>
            <person name="Chow T.F."/>
            <person name="Alfred S.E."/>
            <person name="Bonetta D."/>
            <person name="Finkelstein R."/>
            <person name="Provart N.J."/>
            <person name="Desveaux D."/>
            <person name="Rodriguez P.L."/>
            <person name="McCourt P."/>
            <person name="Zhu J.-K."/>
            <person name="Schroeder J.I."/>
            <person name="Volkman B.F."/>
            <person name="Cutler S.R."/>
        </authorList>
    </citation>
    <scope>GENE FAMILY</scope>
    <scope>NOMENCLATURE</scope>
</reference>
<reference key="6">
    <citation type="journal article" date="2010" name="Plant J.">
        <title>PYR/PYL/RCAR family members are major in-vivo ABI1 protein phosphatase 2C-interacting proteins in Arabidopsis.</title>
        <authorList>
            <person name="Nishimura N."/>
            <person name="Sarkeshik A."/>
            <person name="Nito K."/>
            <person name="Park S.-Y."/>
            <person name="Wang A."/>
            <person name="Carvalho P.C."/>
            <person name="Lee S."/>
            <person name="Caddell D.F."/>
            <person name="Cutler S.R."/>
            <person name="Chory J."/>
            <person name="Yates J.R."/>
            <person name="Schroeder J.I."/>
        </authorList>
    </citation>
    <scope>INTERACTION WITH ABI1</scope>
    <scope>IDENTIFICATION BY MASS SPECTROMETRY</scope>
</reference>
<reference key="7">
    <citation type="journal article" date="2013" name="Cell Res.">
        <title>Molecular basis for the selective and ABA-independent inhibition of PP2CA by PYL13.</title>
        <authorList>
            <person name="Li W."/>
            <person name="Wang L."/>
            <person name="Sheng X."/>
            <person name="Yan C."/>
            <person name="Zhou R."/>
            <person name="Hang J."/>
            <person name="Yin P."/>
            <person name="Yan N."/>
        </authorList>
    </citation>
    <scope>INTERACTION WITH PYL13</scope>
</reference>
<reference key="8">
    <citation type="journal article" date="2013" name="PLoS ONE">
        <title>Structural insights into the abscisic acid stereospecificity by the ABA receptors PYR/PYL/RCAR.</title>
        <authorList>
            <person name="Zhang X."/>
            <person name="Jiang L."/>
            <person name="Wang G."/>
            <person name="Yu L."/>
            <person name="Zhang Q."/>
            <person name="Xin Q."/>
            <person name="Wu W."/>
            <person name="Gong Z."/>
            <person name="Chen Z."/>
        </authorList>
    </citation>
    <scope>FUNCTION</scope>
    <scope>GENE FAMILY</scope>
</reference>
<reference key="9">
    <citation type="journal article" date="2011" name="Mol. Cell">
        <title>The molecular basis of ABA-independent inhibition of PP2Cs by a subclass of PYL proteins.</title>
        <authorList>
            <person name="Hao Q."/>
            <person name="Yin P."/>
            <person name="Li W."/>
            <person name="Wang L."/>
            <person name="Yan C."/>
            <person name="Lin Z."/>
            <person name="Wu J.Z."/>
            <person name="Wang J."/>
            <person name="Yan S.F."/>
            <person name="Yan N."/>
        </authorList>
    </citation>
    <scope>X-RAY CRYSTALLOGRAPHY (1.50 ANGSTROMS) IN COMPLEX WITH HAB1</scope>
    <scope>FUNCTION</scope>
    <scope>MONOMER</scope>
    <scope>SUBUNIT</scope>
    <scope>INTERACTION WITH ABI1 AND HAB1</scope>
    <scope>GENE FAMILY</scope>
</reference>
<reference key="10">
    <citation type="submission" date="2011-03" db="PDB data bank">
        <title>Crystal structure of abscisic acid-bound PYL10.</title>
        <authorList>
            <person name="Sun D.M."/>
            <person name="Wu M.H."/>
            <person name="Wang H.P."/>
            <person name="Zang J.Y."/>
            <person name="Tian C.L."/>
        </authorList>
    </citation>
    <scope>X-RAY CRYSTALLOGRAPHY (2.70 ANGSTROMS) IN COMPLEX WITH ABA</scope>
</reference>
<keyword id="KW-0002">3D-structure</keyword>
<keyword id="KW-0938">Abscisic acid signaling pathway</keyword>
<keyword id="KW-1003">Cell membrane</keyword>
<keyword id="KW-0963">Cytoplasm</keyword>
<keyword id="KW-1015">Disulfide bond</keyword>
<keyword id="KW-0472">Membrane</keyword>
<keyword id="KW-0539">Nucleus</keyword>
<keyword id="KW-0650">Protein phosphatase inhibitor</keyword>
<keyword id="KW-0675">Receptor</keyword>
<keyword id="KW-1185">Reference proteome</keyword>